<proteinExistence type="inferred from homology"/>
<dbReference type="EMBL" id="CP000548">
    <property type="protein sequence ID" value="ABO05571.1"/>
    <property type="molecule type" value="Genomic_DNA"/>
</dbReference>
<dbReference type="RefSeq" id="WP_004196859.1">
    <property type="nucleotide sequence ID" value="NZ_CP007802.1"/>
</dbReference>
<dbReference type="SMR" id="A3MR08"/>
<dbReference type="KEGG" id="bmaz:BM44_191"/>
<dbReference type="KEGG" id="bmn:BMA10247_3176"/>
<dbReference type="PATRIC" id="fig|320389.8.peg.203"/>
<dbReference type="GO" id="GO:0003676">
    <property type="term" value="F:nucleic acid binding"/>
    <property type="evidence" value="ECO:0007669"/>
    <property type="project" value="InterPro"/>
</dbReference>
<dbReference type="Gene3D" id="3.40.1350.10">
    <property type="match status" value="1"/>
</dbReference>
<dbReference type="HAMAP" id="MF_00048">
    <property type="entry name" value="UPF0102"/>
    <property type="match status" value="1"/>
</dbReference>
<dbReference type="InterPro" id="IPR011335">
    <property type="entry name" value="Restrct_endonuc-II-like"/>
</dbReference>
<dbReference type="InterPro" id="IPR011856">
    <property type="entry name" value="tRNA_endonuc-like_dom_sf"/>
</dbReference>
<dbReference type="InterPro" id="IPR003509">
    <property type="entry name" value="UPF0102_YraN-like"/>
</dbReference>
<dbReference type="NCBIfam" id="NF009150">
    <property type="entry name" value="PRK12497.1-3"/>
    <property type="match status" value="1"/>
</dbReference>
<dbReference type="NCBIfam" id="TIGR00252">
    <property type="entry name" value="YraN family protein"/>
    <property type="match status" value="1"/>
</dbReference>
<dbReference type="PANTHER" id="PTHR34039">
    <property type="entry name" value="UPF0102 PROTEIN YRAN"/>
    <property type="match status" value="1"/>
</dbReference>
<dbReference type="PANTHER" id="PTHR34039:SF1">
    <property type="entry name" value="UPF0102 PROTEIN YRAN"/>
    <property type="match status" value="1"/>
</dbReference>
<dbReference type="Pfam" id="PF02021">
    <property type="entry name" value="UPF0102"/>
    <property type="match status" value="1"/>
</dbReference>
<dbReference type="SUPFAM" id="SSF52980">
    <property type="entry name" value="Restriction endonuclease-like"/>
    <property type="match status" value="1"/>
</dbReference>
<reference key="1">
    <citation type="journal article" date="2010" name="Genome Biol. Evol.">
        <title>Continuing evolution of Burkholderia mallei through genome reduction and large-scale rearrangements.</title>
        <authorList>
            <person name="Losada L."/>
            <person name="Ronning C.M."/>
            <person name="DeShazer D."/>
            <person name="Woods D."/>
            <person name="Fedorova N."/>
            <person name="Kim H.S."/>
            <person name="Shabalina S.A."/>
            <person name="Pearson T.R."/>
            <person name="Brinkac L."/>
            <person name="Tan P."/>
            <person name="Nandi T."/>
            <person name="Crabtree J."/>
            <person name="Badger J."/>
            <person name="Beckstrom-Sternberg S."/>
            <person name="Saqib M."/>
            <person name="Schutzer S.E."/>
            <person name="Keim P."/>
            <person name="Nierman W.C."/>
        </authorList>
    </citation>
    <scope>NUCLEOTIDE SEQUENCE [LARGE SCALE GENOMIC DNA]</scope>
    <source>
        <strain>NCTC 10247</strain>
    </source>
</reference>
<protein>
    <recommendedName>
        <fullName evidence="1">UPF0102 protein BMA10247_3176</fullName>
    </recommendedName>
</protein>
<organism>
    <name type="scientific">Burkholderia mallei (strain NCTC 10247)</name>
    <dbReference type="NCBI Taxonomy" id="320389"/>
    <lineage>
        <taxon>Bacteria</taxon>
        <taxon>Pseudomonadati</taxon>
        <taxon>Pseudomonadota</taxon>
        <taxon>Betaproteobacteria</taxon>
        <taxon>Burkholderiales</taxon>
        <taxon>Burkholderiaceae</taxon>
        <taxon>Burkholderia</taxon>
        <taxon>pseudomallei group</taxon>
    </lineage>
</organism>
<gene>
    <name type="ordered locus">BMA10247_3176</name>
</gene>
<name>Y5676_BURM7</name>
<comment type="similarity">
    <text evidence="1">Belongs to the UPF0102 family.</text>
</comment>
<sequence length="144" mass="15529">MCHAREASPGTGEPEAAPRDNFPRAAGSKRGVGAAFETRAQRFLERAGLALVARNVTVRGGEIDLVMRERDGTLVFVEVRARANSRYGGAAASIGVRKRMRLLLAAHAFWARTGGANACRFDVVAFEGGRLVWLRDAFRADDAG</sequence>
<feature type="chain" id="PRO_0000336142" description="UPF0102 protein BMA10247_3176">
    <location>
        <begin position="1"/>
        <end position="144"/>
    </location>
</feature>
<feature type="region of interest" description="Disordered" evidence="2">
    <location>
        <begin position="1"/>
        <end position="28"/>
    </location>
</feature>
<accession>A3MR08</accession>
<evidence type="ECO:0000255" key="1">
    <source>
        <dbReference type="HAMAP-Rule" id="MF_00048"/>
    </source>
</evidence>
<evidence type="ECO:0000256" key="2">
    <source>
        <dbReference type="SAM" id="MobiDB-lite"/>
    </source>
</evidence>